<evidence type="ECO:0000255" key="1">
    <source>
        <dbReference type="HAMAP-Rule" id="MF_00133"/>
    </source>
</evidence>
<reference key="1">
    <citation type="submission" date="2008-01" db="EMBL/GenBank/DDBJ databases">
        <title>Complete sequence of Thermoanaerobacter sp. X514.</title>
        <authorList>
            <consortium name="US DOE Joint Genome Institute"/>
            <person name="Copeland A."/>
            <person name="Lucas S."/>
            <person name="Lapidus A."/>
            <person name="Barry K."/>
            <person name="Glavina del Rio T."/>
            <person name="Dalin E."/>
            <person name="Tice H."/>
            <person name="Pitluck S."/>
            <person name="Bruce D."/>
            <person name="Goodwin L."/>
            <person name="Saunders E."/>
            <person name="Brettin T."/>
            <person name="Detter J.C."/>
            <person name="Han C."/>
            <person name="Schmutz J."/>
            <person name="Larimer F."/>
            <person name="Land M."/>
            <person name="Hauser L."/>
            <person name="Kyrpides N."/>
            <person name="Kim E."/>
            <person name="Hemme C."/>
            <person name="Fields M.W."/>
            <person name="He Z."/>
            <person name="Zhou J."/>
            <person name="Richardson P."/>
        </authorList>
    </citation>
    <scope>NUCLEOTIDE SEQUENCE [LARGE SCALE GENOMIC DNA]</scope>
    <source>
        <strain>X514</strain>
    </source>
</reference>
<feature type="chain" id="PRO_1000095833" description="Tryptophan synthase beta chain">
    <location>
        <begin position="1"/>
        <end position="391"/>
    </location>
</feature>
<feature type="modified residue" description="N6-(pyridoxal phosphate)lysine" evidence="1">
    <location>
        <position position="84"/>
    </location>
</feature>
<name>TRPB_THEPX</name>
<protein>
    <recommendedName>
        <fullName evidence="1">Tryptophan synthase beta chain</fullName>
        <ecNumber evidence="1">4.2.1.20</ecNumber>
    </recommendedName>
</protein>
<keyword id="KW-0028">Amino-acid biosynthesis</keyword>
<keyword id="KW-0057">Aromatic amino acid biosynthesis</keyword>
<keyword id="KW-0456">Lyase</keyword>
<keyword id="KW-0663">Pyridoxal phosphate</keyword>
<keyword id="KW-0822">Tryptophan biosynthesis</keyword>
<gene>
    <name evidence="1" type="primary">trpB</name>
    <name type="ordered locus">Teth514_1864</name>
</gene>
<organism>
    <name type="scientific">Thermoanaerobacter sp. (strain X514)</name>
    <dbReference type="NCBI Taxonomy" id="399726"/>
    <lineage>
        <taxon>Bacteria</taxon>
        <taxon>Bacillati</taxon>
        <taxon>Bacillota</taxon>
        <taxon>Clostridia</taxon>
        <taxon>Thermoanaerobacterales</taxon>
        <taxon>Thermoanaerobacteraceae</taxon>
        <taxon>Thermoanaerobacter</taxon>
    </lineage>
</organism>
<comment type="function">
    <text evidence="1">The beta subunit is responsible for the synthesis of L-tryptophan from indole and L-serine.</text>
</comment>
<comment type="catalytic activity">
    <reaction evidence="1">
        <text>(1S,2R)-1-C-(indol-3-yl)glycerol 3-phosphate + L-serine = D-glyceraldehyde 3-phosphate + L-tryptophan + H2O</text>
        <dbReference type="Rhea" id="RHEA:10532"/>
        <dbReference type="ChEBI" id="CHEBI:15377"/>
        <dbReference type="ChEBI" id="CHEBI:33384"/>
        <dbReference type="ChEBI" id="CHEBI:57912"/>
        <dbReference type="ChEBI" id="CHEBI:58866"/>
        <dbReference type="ChEBI" id="CHEBI:59776"/>
        <dbReference type="EC" id="4.2.1.20"/>
    </reaction>
</comment>
<comment type="cofactor">
    <cofactor evidence="1">
        <name>pyridoxal 5'-phosphate</name>
        <dbReference type="ChEBI" id="CHEBI:597326"/>
    </cofactor>
</comment>
<comment type="pathway">
    <text evidence="1">Amino-acid biosynthesis; L-tryptophan biosynthesis; L-tryptophan from chorismate: step 5/5.</text>
</comment>
<comment type="subunit">
    <text evidence="1">Tetramer of two alpha and two beta chains.</text>
</comment>
<comment type="similarity">
    <text evidence="1">Belongs to the TrpB family.</text>
</comment>
<accession>B0K2T9</accession>
<sequence>MSGRFGRFGGQYVPETVMNALIELEREFEKAKQDKDFMEEYRYYLREYSGRPTPLYYAENLTKKLGGAKIYLKREDLNHTGAHKINNVLGQILLAKRMNKKRVIAETGAGQHGVATATAAAMFGMECEIFMGEEDIKRQSLNVFRMKLLGAKVTPVKSGTGTLKDAVNEAIRDWVTNINDTFYVIGSVVGPHPYPTMVRDFQRVIGDEAKEQILQKEGRLPDYVIACVGGGSNAMGIFYPFIEDKEVKLIGVEAAGEGIETGKHAAAMAKGSVGVLHGMMTYLLQDEEGRIMPVYSISAGLDYPGVGPEHAFLKESNRAQYVYATDEEALAAFMDLSQTEGIIPALESAHALAYAMKLAPNLTKDNIIIVNLSGRGDKDVNTVAKVLGVEL</sequence>
<dbReference type="EC" id="4.2.1.20" evidence="1"/>
<dbReference type="EMBL" id="CP000923">
    <property type="protein sequence ID" value="ABY93144.1"/>
    <property type="molecule type" value="Genomic_DNA"/>
</dbReference>
<dbReference type="RefSeq" id="WP_009052483.1">
    <property type="nucleotide sequence ID" value="NC_010320.1"/>
</dbReference>
<dbReference type="SMR" id="B0K2T9"/>
<dbReference type="KEGG" id="tex:Teth514_1864"/>
<dbReference type="HOGENOM" id="CLU_016734_3_1_9"/>
<dbReference type="UniPathway" id="UPA00035">
    <property type="reaction ID" value="UER00044"/>
</dbReference>
<dbReference type="Proteomes" id="UP000002155">
    <property type="component" value="Chromosome"/>
</dbReference>
<dbReference type="GO" id="GO:0005737">
    <property type="term" value="C:cytoplasm"/>
    <property type="evidence" value="ECO:0007669"/>
    <property type="project" value="TreeGrafter"/>
</dbReference>
<dbReference type="GO" id="GO:0004834">
    <property type="term" value="F:tryptophan synthase activity"/>
    <property type="evidence" value="ECO:0007669"/>
    <property type="project" value="UniProtKB-UniRule"/>
</dbReference>
<dbReference type="CDD" id="cd06446">
    <property type="entry name" value="Trp-synth_B"/>
    <property type="match status" value="1"/>
</dbReference>
<dbReference type="FunFam" id="3.40.50.1100:FF:000001">
    <property type="entry name" value="Tryptophan synthase beta chain"/>
    <property type="match status" value="1"/>
</dbReference>
<dbReference type="FunFam" id="3.40.50.1100:FF:000004">
    <property type="entry name" value="Tryptophan synthase beta chain"/>
    <property type="match status" value="1"/>
</dbReference>
<dbReference type="Gene3D" id="3.40.50.1100">
    <property type="match status" value="2"/>
</dbReference>
<dbReference type="HAMAP" id="MF_00133">
    <property type="entry name" value="Trp_synth_beta"/>
    <property type="match status" value="1"/>
</dbReference>
<dbReference type="InterPro" id="IPR006653">
    <property type="entry name" value="Trp_synth_b_CS"/>
</dbReference>
<dbReference type="InterPro" id="IPR006654">
    <property type="entry name" value="Trp_synth_beta"/>
</dbReference>
<dbReference type="InterPro" id="IPR023026">
    <property type="entry name" value="Trp_synth_beta/beta-like"/>
</dbReference>
<dbReference type="InterPro" id="IPR001926">
    <property type="entry name" value="TrpB-like_PALP"/>
</dbReference>
<dbReference type="InterPro" id="IPR036052">
    <property type="entry name" value="TrpB-like_PALP_sf"/>
</dbReference>
<dbReference type="NCBIfam" id="TIGR00263">
    <property type="entry name" value="trpB"/>
    <property type="match status" value="1"/>
</dbReference>
<dbReference type="PANTHER" id="PTHR48077:SF3">
    <property type="entry name" value="TRYPTOPHAN SYNTHASE"/>
    <property type="match status" value="1"/>
</dbReference>
<dbReference type="PANTHER" id="PTHR48077">
    <property type="entry name" value="TRYPTOPHAN SYNTHASE-RELATED"/>
    <property type="match status" value="1"/>
</dbReference>
<dbReference type="Pfam" id="PF00291">
    <property type="entry name" value="PALP"/>
    <property type="match status" value="1"/>
</dbReference>
<dbReference type="PIRSF" id="PIRSF001413">
    <property type="entry name" value="Trp_syn_beta"/>
    <property type="match status" value="1"/>
</dbReference>
<dbReference type="SUPFAM" id="SSF53686">
    <property type="entry name" value="Tryptophan synthase beta subunit-like PLP-dependent enzymes"/>
    <property type="match status" value="1"/>
</dbReference>
<dbReference type="PROSITE" id="PS00168">
    <property type="entry name" value="TRP_SYNTHASE_BETA"/>
    <property type="match status" value="1"/>
</dbReference>
<proteinExistence type="inferred from homology"/>